<keyword id="KW-0040">ANK repeat</keyword>
<keyword id="KW-1185">Reference proteome</keyword>
<keyword id="KW-0677">Repeat</keyword>
<gene>
    <name type="ordered locus">MIMI_R599</name>
</gene>
<name>YR599_MIMIV</name>
<reference key="1">
    <citation type="journal article" date="2004" name="Science">
        <title>The 1.2-megabase genome sequence of Mimivirus.</title>
        <authorList>
            <person name="Raoult D."/>
            <person name="Audic S."/>
            <person name="Robert C."/>
            <person name="Abergel C."/>
            <person name="Renesto P."/>
            <person name="Ogata H."/>
            <person name="La Scola B."/>
            <person name="Susan M."/>
            <person name="Claverie J.-M."/>
        </authorList>
    </citation>
    <scope>NUCLEOTIDE SEQUENCE [LARGE SCALE GENOMIC DNA]</scope>
    <source>
        <strain>Rowbotham-Bradford</strain>
    </source>
</reference>
<proteinExistence type="predicted"/>
<sequence>MLFKKIDDINPLILLIDSCQYTNQIMNSYRHRNQTTSFIRKETIDCNIQLPRKIESDLLLSLSSNTDDYIPIINSLSNEDHINILKYTIVIDNVNYLEKILNCTSIDLSVNDDILLCTAIINCSSECLLYLLDKGIPIDFCDNYAIRACCIRLEKYIYTTRKNKSSCDMLKIVIDRGGNVNTHNYEPLYSAVNDNNFDKIKLLVENGANKLSDFKRKITNTNLEIFQYLIDNRVELEVNFDDIFLQSIINDDSECMKLFIELGANINSIPTLELTKIIINARHEILEILINYGLDINNINDKINNEINDNRCEDYDETIKTVELVSNAGIDIINLLKVVIQNALSVYNFTYPKYSI</sequence>
<protein>
    <recommendedName>
        <fullName>Putative ankyrin repeat protein R599</fullName>
    </recommendedName>
</protein>
<organismHost>
    <name type="scientific">Acanthamoeba polyphaga</name>
    <name type="common">Amoeba</name>
    <dbReference type="NCBI Taxonomy" id="5757"/>
</organismHost>
<accession>Q5UP64</accession>
<dbReference type="EMBL" id="AY653733">
    <property type="protein sequence ID" value="AAV50862.1"/>
    <property type="molecule type" value="Genomic_DNA"/>
</dbReference>
<dbReference type="SMR" id="Q5UP64"/>
<dbReference type="Proteomes" id="UP000001134">
    <property type="component" value="Genome"/>
</dbReference>
<dbReference type="Gene3D" id="1.25.40.20">
    <property type="entry name" value="Ankyrin repeat-containing domain"/>
    <property type="match status" value="1"/>
</dbReference>
<dbReference type="InterPro" id="IPR002110">
    <property type="entry name" value="Ankyrin_rpt"/>
</dbReference>
<dbReference type="InterPro" id="IPR036770">
    <property type="entry name" value="Ankyrin_rpt-contain_sf"/>
</dbReference>
<dbReference type="SMART" id="SM00248">
    <property type="entry name" value="ANK"/>
    <property type="match status" value="4"/>
</dbReference>
<dbReference type="SUPFAM" id="SSF48403">
    <property type="entry name" value="Ankyrin repeat"/>
    <property type="match status" value="1"/>
</dbReference>
<dbReference type="PROSITE" id="PS50297">
    <property type="entry name" value="ANK_REP_REGION"/>
    <property type="match status" value="1"/>
</dbReference>
<dbReference type="PROSITE" id="PS50088">
    <property type="entry name" value="ANK_REPEAT"/>
    <property type="match status" value="1"/>
</dbReference>
<feature type="chain" id="PRO_0000067178" description="Putative ankyrin repeat protein R599">
    <location>
        <begin position="1"/>
        <end position="356"/>
    </location>
</feature>
<feature type="repeat" description="ANK 1">
    <location>
        <begin position="111"/>
        <end position="143"/>
    </location>
</feature>
<feature type="repeat" description="ANK 2">
    <location>
        <begin position="152"/>
        <end position="182"/>
    </location>
</feature>
<feature type="repeat" description="ANK 3">
    <location>
        <begin position="183"/>
        <end position="213"/>
    </location>
</feature>
<feature type="repeat" description="ANK 4">
    <location>
        <begin position="215"/>
        <end position="238"/>
    </location>
</feature>
<feature type="repeat" description="ANK 5">
    <location>
        <begin position="239"/>
        <end position="266"/>
    </location>
</feature>
<feature type="repeat" description="ANK 6">
    <location>
        <begin position="267"/>
        <end position="298"/>
    </location>
</feature>
<organism>
    <name type="scientific">Acanthamoeba polyphaga mimivirus</name>
    <name type="common">APMV</name>
    <dbReference type="NCBI Taxonomy" id="212035"/>
    <lineage>
        <taxon>Viruses</taxon>
        <taxon>Varidnaviria</taxon>
        <taxon>Bamfordvirae</taxon>
        <taxon>Nucleocytoviricota</taxon>
        <taxon>Megaviricetes</taxon>
        <taxon>Imitervirales</taxon>
        <taxon>Mimiviridae</taxon>
        <taxon>Megamimivirinae</taxon>
        <taxon>Mimivirus</taxon>
        <taxon>Mimivirus bradfordmassiliense</taxon>
    </lineage>
</organism>